<comment type="function">
    <text evidence="1">Can catalyze the hydrolysis of ATP in the presence of single-stranded DNA, the ATP-dependent uptake of single-stranded DNA by duplex DNA, and the ATP-dependent hybridization of homologous single-stranded DNAs. It interacts with LexA causing its activation and leading to its autocatalytic cleavage.</text>
</comment>
<comment type="subcellular location">
    <subcellularLocation>
        <location evidence="1">Cytoplasm</location>
    </subcellularLocation>
</comment>
<comment type="similarity">
    <text evidence="1">Belongs to the RecA family.</text>
</comment>
<protein>
    <recommendedName>
        <fullName evidence="1">Protein RecA</fullName>
    </recommendedName>
    <alternativeName>
        <fullName evidence="1">Recombinase A</fullName>
    </alternativeName>
</protein>
<organism>
    <name type="scientific">Bacillus pumilus (strain SAFR-032)</name>
    <dbReference type="NCBI Taxonomy" id="315750"/>
    <lineage>
        <taxon>Bacteria</taxon>
        <taxon>Bacillati</taxon>
        <taxon>Bacillota</taxon>
        <taxon>Bacilli</taxon>
        <taxon>Bacillales</taxon>
        <taxon>Bacillaceae</taxon>
        <taxon>Bacillus</taxon>
    </lineage>
</organism>
<name>RECA_BACP2</name>
<evidence type="ECO:0000255" key="1">
    <source>
        <dbReference type="HAMAP-Rule" id="MF_00268"/>
    </source>
</evidence>
<reference key="1">
    <citation type="journal article" date="2007" name="PLoS ONE">
        <title>Paradoxical DNA repair and peroxide resistance gene conservation in Bacillus pumilus SAFR-032.</title>
        <authorList>
            <person name="Gioia J."/>
            <person name="Yerrapragada S."/>
            <person name="Qin X."/>
            <person name="Jiang H."/>
            <person name="Igboeli O.C."/>
            <person name="Muzny D."/>
            <person name="Dugan-Rocha S."/>
            <person name="Ding Y."/>
            <person name="Hawes A."/>
            <person name="Liu W."/>
            <person name="Perez L."/>
            <person name="Kovar C."/>
            <person name="Dinh H."/>
            <person name="Lee S."/>
            <person name="Nazareth L."/>
            <person name="Blyth P."/>
            <person name="Holder M."/>
            <person name="Buhay C."/>
            <person name="Tirumalai M.R."/>
            <person name="Liu Y."/>
            <person name="Dasgupta I."/>
            <person name="Bokhetache L."/>
            <person name="Fujita M."/>
            <person name="Karouia F."/>
            <person name="Eswara Moorthy P."/>
            <person name="Siefert J."/>
            <person name="Uzman A."/>
            <person name="Buzumbo P."/>
            <person name="Verma A."/>
            <person name="Zwiya H."/>
            <person name="McWilliams B.D."/>
            <person name="Olowu A."/>
            <person name="Clinkenbeard K.D."/>
            <person name="Newcombe D."/>
            <person name="Golebiewski L."/>
            <person name="Petrosino J.F."/>
            <person name="Nicholson W.L."/>
            <person name="Fox G.E."/>
            <person name="Venkateswaran K."/>
            <person name="Highlander S.K."/>
            <person name="Weinstock G.M."/>
        </authorList>
    </citation>
    <scope>NUCLEOTIDE SEQUENCE [LARGE SCALE GENOMIC DNA]</scope>
    <source>
        <strain>SAFR-032</strain>
    </source>
</reference>
<accession>A8FDG3</accession>
<dbReference type="EMBL" id="CP000813">
    <property type="protein sequence ID" value="ABV62280.1"/>
    <property type="molecule type" value="Genomic_DNA"/>
</dbReference>
<dbReference type="RefSeq" id="WP_012010020.1">
    <property type="nucleotide sequence ID" value="NC_009848.4"/>
</dbReference>
<dbReference type="SMR" id="A8FDG3"/>
<dbReference type="STRING" id="315750.BPUM_1598"/>
<dbReference type="GeneID" id="5620861"/>
<dbReference type="KEGG" id="bpu:BPUM_1598"/>
<dbReference type="eggNOG" id="COG0468">
    <property type="taxonomic scope" value="Bacteria"/>
</dbReference>
<dbReference type="HOGENOM" id="CLU_040469_1_2_9"/>
<dbReference type="OrthoDB" id="9776733at2"/>
<dbReference type="Proteomes" id="UP000001355">
    <property type="component" value="Chromosome"/>
</dbReference>
<dbReference type="GO" id="GO:0005829">
    <property type="term" value="C:cytosol"/>
    <property type="evidence" value="ECO:0007669"/>
    <property type="project" value="TreeGrafter"/>
</dbReference>
<dbReference type="GO" id="GO:0005524">
    <property type="term" value="F:ATP binding"/>
    <property type="evidence" value="ECO:0007669"/>
    <property type="project" value="UniProtKB-UniRule"/>
</dbReference>
<dbReference type="GO" id="GO:0016887">
    <property type="term" value="F:ATP hydrolysis activity"/>
    <property type="evidence" value="ECO:0007669"/>
    <property type="project" value="InterPro"/>
</dbReference>
<dbReference type="GO" id="GO:0140664">
    <property type="term" value="F:ATP-dependent DNA damage sensor activity"/>
    <property type="evidence" value="ECO:0007669"/>
    <property type="project" value="InterPro"/>
</dbReference>
<dbReference type="GO" id="GO:0003684">
    <property type="term" value="F:damaged DNA binding"/>
    <property type="evidence" value="ECO:0007669"/>
    <property type="project" value="UniProtKB-UniRule"/>
</dbReference>
<dbReference type="GO" id="GO:0003697">
    <property type="term" value="F:single-stranded DNA binding"/>
    <property type="evidence" value="ECO:0007669"/>
    <property type="project" value="UniProtKB-UniRule"/>
</dbReference>
<dbReference type="GO" id="GO:0006310">
    <property type="term" value="P:DNA recombination"/>
    <property type="evidence" value="ECO:0007669"/>
    <property type="project" value="UniProtKB-UniRule"/>
</dbReference>
<dbReference type="GO" id="GO:0006281">
    <property type="term" value="P:DNA repair"/>
    <property type="evidence" value="ECO:0007669"/>
    <property type="project" value="UniProtKB-UniRule"/>
</dbReference>
<dbReference type="GO" id="GO:0009432">
    <property type="term" value="P:SOS response"/>
    <property type="evidence" value="ECO:0007669"/>
    <property type="project" value="UniProtKB-UniRule"/>
</dbReference>
<dbReference type="CDD" id="cd00983">
    <property type="entry name" value="RecA"/>
    <property type="match status" value="1"/>
</dbReference>
<dbReference type="FunFam" id="3.40.50.300:FF:000087">
    <property type="entry name" value="Recombinase RecA"/>
    <property type="match status" value="1"/>
</dbReference>
<dbReference type="Gene3D" id="3.40.50.300">
    <property type="entry name" value="P-loop containing nucleotide triphosphate hydrolases"/>
    <property type="match status" value="1"/>
</dbReference>
<dbReference type="HAMAP" id="MF_00268">
    <property type="entry name" value="RecA"/>
    <property type="match status" value="1"/>
</dbReference>
<dbReference type="InterPro" id="IPR003593">
    <property type="entry name" value="AAA+_ATPase"/>
</dbReference>
<dbReference type="InterPro" id="IPR013765">
    <property type="entry name" value="DNA_recomb/repair_RecA"/>
</dbReference>
<dbReference type="InterPro" id="IPR020584">
    <property type="entry name" value="DNA_recomb/repair_RecA_CS"/>
</dbReference>
<dbReference type="InterPro" id="IPR027417">
    <property type="entry name" value="P-loop_NTPase"/>
</dbReference>
<dbReference type="InterPro" id="IPR049261">
    <property type="entry name" value="RecA-like_C"/>
</dbReference>
<dbReference type="InterPro" id="IPR049428">
    <property type="entry name" value="RecA-like_N"/>
</dbReference>
<dbReference type="InterPro" id="IPR020588">
    <property type="entry name" value="RecA_ATP-bd"/>
</dbReference>
<dbReference type="InterPro" id="IPR023400">
    <property type="entry name" value="RecA_C_sf"/>
</dbReference>
<dbReference type="InterPro" id="IPR020587">
    <property type="entry name" value="RecA_monomer-monomer_interface"/>
</dbReference>
<dbReference type="NCBIfam" id="TIGR02012">
    <property type="entry name" value="tigrfam_recA"/>
    <property type="match status" value="1"/>
</dbReference>
<dbReference type="PANTHER" id="PTHR45900:SF1">
    <property type="entry name" value="MITOCHONDRIAL DNA REPAIR PROTEIN RECA HOMOLOG-RELATED"/>
    <property type="match status" value="1"/>
</dbReference>
<dbReference type="PANTHER" id="PTHR45900">
    <property type="entry name" value="RECA"/>
    <property type="match status" value="1"/>
</dbReference>
<dbReference type="Pfam" id="PF00154">
    <property type="entry name" value="RecA"/>
    <property type="match status" value="1"/>
</dbReference>
<dbReference type="Pfam" id="PF21096">
    <property type="entry name" value="RecA_C"/>
    <property type="match status" value="1"/>
</dbReference>
<dbReference type="PRINTS" id="PR00142">
    <property type="entry name" value="RECA"/>
</dbReference>
<dbReference type="SMART" id="SM00382">
    <property type="entry name" value="AAA"/>
    <property type="match status" value="1"/>
</dbReference>
<dbReference type="SUPFAM" id="SSF52540">
    <property type="entry name" value="P-loop containing nucleoside triphosphate hydrolases"/>
    <property type="match status" value="1"/>
</dbReference>
<dbReference type="SUPFAM" id="SSF54752">
    <property type="entry name" value="RecA protein, C-terminal domain"/>
    <property type="match status" value="1"/>
</dbReference>
<dbReference type="PROSITE" id="PS00321">
    <property type="entry name" value="RECA_1"/>
    <property type="match status" value="1"/>
</dbReference>
<dbReference type="PROSITE" id="PS50162">
    <property type="entry name" value="RECA_2"/>
    <property type="match status" value="1"/>
</dbReference>
<dbReference type="PROSITE" id="PS50163">
    <property type="entry name" value="RECA_3"/>
    <property type="match status" value="1"/>
</dbReference>
<proteinExistence type="inferred from homology"/>
<sequence length="346" mass="37735">MSDRQAALDMALKQIEKQFGKGSIMKLGEQTDTRISTVPSGSLALDTALGIGGYPRGRIIEVYGPESSGKTTVALHAIAEVQQQGGQAAFIDAEHALDPVYAQKLGVNIDELLLSQPDTGEQALEIAEALVRSGAVDIVVIDSVAALVPKAEIEGDMGDSHVGLQARLMSQALRKLSGAINKSKTIAIFINQIREKVGVMFGNPETTPGGRALKFYSSVRLEVRRAEQLKQGNDIMGNKTRIKVVKNKVAPPFRIAEVDIMYGEGISKEGEIIDLGSELDIVQKSGAWYSYQEERLGQGRENAKQFLKENKDILLMIQEQIREHYGLDTNGVKAPEDEEGQEELEF</sequence>
<keyword id="KW-0067">ATP-binding</keyword>
<keyword id="KW-0963">Cytoplasm</keyword>
<keyword id="KW-0227">DNA damage</keyword>
<keyword id="KW-0233">DNA recombination</keyword>
<keyword id="KW-0234">DNA repair</keyword>
<keyword id="KW-0238">DNA-binding</keyword>
<keyword id="KW-0547">Nucleotide-binding</keyword>
<keyword id="KW-0742">SOS response</keyword>
<feature type="chain" id="PRO_1000059122" description="Protein RecA">
    <location>
        <begin position="1"/>
        <end position="346"/>
    </location>
</feature>
<feature type="binding site" evidence="1">
    <location>
        <begin position="64"/>
        <end position="71"/>
    </location>
    <ligand>
        <name>ATP</name>
        <dbReference type="ChEBI" id="CHEBI:30616"/>
    </ligand>
</feature>
<gene>
    <name evidence="1" type="primary">recA</name>
    <name type="ordered locus">BPUM_1598</name>
</gene>